<dbReference type="EC" id="3.6.1.59" evidence="8 9 15 16"/>
<dbReference type="EMBL" id="AH010984">
    <property type="protein sequence ID" value="AAK91763.1"/>
    <property type="molecule type" value="Genomic_DNA"/>
</dbReference>
<dbReference type="EMBL" id="AY040771">
    <property type="protein sequence ID" value="AAK91765.1"/>
    <property type="molecule type" value="mRNA"/>
</dbReference>
<dbReference type="EMBL" id="AF532613">
    <property type="protein sequence ID" value="AAM90310.1"/>
    <property type="molecule type" value="mRNA"/>
</dbReference>
<dbReference type="EMBL" id="AY077684">
    <property type="protein sequence ID" value="AAL77216.1"/>
    <property type="molecule type" value="mRNA"/>
</dbReference>
<dbReference type="EMBL" id="AF077201">
    <property type="protein sequence ID" value="AAD26996.1"/>
    <property type="molecule type" value="mRNA"/>
</dbReference>
<dbReference type="EMBL" id="BC014532">
    <property type="protein sequence ID" value="AAH14532.1"/>
    <property type="molecule type" value="mRNA"/>
</dbReference>
<dbReference type="CCDS" id="CCDS8473.1"/>
<dbReference type="RefSeq" id="NP_054745.1">
    <property type="nucleotide sequence ID" value="NM_014026.6"/>
</dbReference>
<dbReference type="PDB" id="1ST0">
    <property type="method" value="X-ray"/>
    <property type="resolution" value="1.90 A"/>
    <property type="chains" value="A/B=1-337"/>
</dbReference>
<dbReference type="PDB" id="1ST4">
    <property type="method" value="X-ray"/>
    <property type="resolution" value="2.02 A"/>
    <property type="chains" value="A/B=1-337"/>
</dbReference>
<dbReference type="PDB" id="1XML">
    <property type="method" value="X-ray"/>
    <property type="resolution" value="2.00 A"/>
    <property type="chains" value="A/B=1-337"/>
</dbReference>
<dbReference type="PDB" id="1XMM">
    <property type="method" value="X-ray"/>
    <property type="resolution" value="2.50 A"/>
    <property type="chains" value="A/B/C/D=1-337"/>
</dbReference>
<dbReference type="PDB" id="3BL7">
    <property type="method" value="X-ray"/>
    <property type="resolution" value="2.31 A"/>
    <property type="chains" value="A/B=38-337"/>
</dbReference>
<dbReference type="PDB" id="3BL9">
    <property type="method" value="X-ray"/>
    <property type="resolution" value="1.80 A"/>
    <property type="chains" value="A/B=38-337"/>
</dbReference>
<dbReference type="PDB" id="3BLA">
    <property type="method" value="X-ray"/>
    <property type="resolution" value="2.60 A"/>
    <property type="chains" value="A/B=38-337"/>
</dbReference>
<dbReference type="PDB" id="4QDE">
    <property type="method" value="X-ray"/>
    <property type="resolution" value="2.90 A"/>
    <property type="chains" value="A/B/C/D=2-337"/>
</dbReference>
<dbReference type="PDB" id="4QDV">
    <property type="method" value="X-ray"/>
    <property type="resolution" value="2.80 A"/>
    <property type="chains" value="A/B/C/D=2-337"/>
</dbReference>
<dbReference type="PDB" id="4QEB">
    <property type="method" value="X-ray"/>
    <property type="resolution" value="3.21 A"/>
    <property type="chains" value="A/B/C/D=2-337"/>
</dbReference>
<dbReference type="PDB" id="5OSY">
    <property type="method" value="X-ray"/>
    <property type="resolution" value="2.06 A"/>
    <property type="chains" value="A/B=37-337"/>
</dbReference>
<dbReference type="PDBsum" id="1ST0"/>
<dbReference type="PDBsum" id="1ST4"/>
<dbReference type="PDBsum" id="1XML"/>
<dbReference type="PDBsum" id="1XMM"/>
<dbReference type="PDBsum" id="3BL7"/>
<dbReference type="PDBsum" id="3BL9"/>
<dbReference type="PDBsum" id="3BLA"/>
<dbReference type="PDBsum" id="4QDE"/>
<dbReference type="PDBsum" id="4QDV"/>
<dbReference type="PDBsum" id="4QEB"/>
<dbReference type="PDBsum" id="5OSY"/>
<dbReference type="SMR" id="Q96C86"/>
<dbReference type="BioGRID" id="118787">
    <property type="interactions" value="396"/>
</dbReference>
<dbReference type="FunCoup" id="Q96C86">
    <property type="interactions" value="2502"/>
</dbReference>
<dbReference type="IntAct" id="Q96C86">
    <property type="interactions" value="8"/>
</dbReference>
<dbReference type="STRING" id="9606.ENSP00000263579"/>
<dbReference type="BindingDB" id="Q96C86"/>
<dbReference type="ChEMBL" id="CHEMBL1949488"/>
<dbReference type="DrugBank" id="DB07644">
    <property type="generic name" value="5-[(1S)-1-(3-chlorophenyl)ethoxy]quinazoline-2,4-diamine"/>
</dbReference>
<dbReference type="DrugBank" id="DB07643">
    <property type="generic name" value="5-{[1-(2,3-dichlorobenzyl)piperidin-4-yl]methoxy}quinazoline-2,4-diamine"/>
</dbReference>
<dbReference type="DrugBank" id="DB07642">
    <property type="generic name" value="5-{[1-(2-fluorobenzyl)piperidin-4-yl]methoxy}quinazoline-2,4-diamine"/>
</dbReference>
<dbReference type="DrugBank" id="DB03593">
    <property type="generic name" value="7-methyl-5'-guanylic acid"/>
</dbReference>
<dbReference type="DrugBank" id="DB01960">
    <property type="generic name" value="7-methyl-7,8-dihydroguanosine-5'-diphosphate"/>
</dbReference>
<dbReference type="DrugBank" id="DB01649">
    <property type="generic name" value="7-methyl-GpppA"/>
</dbReference>
<dbReference type="DrugBank" id="DB03958">
    <property type="generic name" value="7-methyl-guanosine-5'-triphosphate-5'-guanosine"/>
</dbReference>
<dbReference type="DrugBank" id="DB16938">
    <property type="generic name" value="D-157495"/>
</dbReference>
<dbReference type="GlyGen" id="Q96C86">
    <property type="glycosylation" value="3 sites, 1 N-linked glycan (1 site), 1 O-linked glycan (2 sites)"/>
</dbReference>
<dbReference type="iPTMnet" id="Q96C86"/>
<dbReference type="PhosphoSitePlus" id="Q96C86"/>
<dbReference type="SwissPalm" id="Q96C86"/>
<dbReference type="BioMuta" id="DCPS"/>
<dbReference type="DMDM" id="116241325"/>
<dbReference type="REPRODUCTION-2DPAGE" id="IPI00335385"/>
<dbReference type="jPOST" id="Q96C86"/>
<dbReference type="MassIVE" id="Q96C86"/>
<dbReference type="PaxDb" id="9606-ENSP00000263579"/>
<dbReference type="PeptideAtlas" id="Q96C86"/>
<dbReference type="ProteomicsDB" id="76164"/>
<dbReference type="Pumba" id="Q96C86"/>
<dbReference type="Antibodypedia" id="32998">
    <property type="antibodies" value="238 antibodies from 24 providers"/>
</dbReference>
<dbReference type="DNASU" id="28960"/>
<dbReference type="Ensembl" id="ENST00000263579.5">
    <property type="protein sequence ID" value="ENSP00000263579.4"/>
    <property type="gene ID" value="ENSG00000110063.10"/>
</dbReference>
<dbReference type="GeneID" id="28960"/>
<dbReference type="KEGG" id="hsa:28960"/>
<dbReference type="MANE-Select" id="ENST00000263579.5">
    <property type="protein sequence ID" value="ENSP00000263579.4"/>
    <property type="RefSeq nucleotide sequence ID" value="NM_014026.6"/>
    <property type="RefSeq protein sequence ID" value="NP_054745.1"/>
</dbReference>
<dbReference type="UCSC" id="uc001qdp.3">
    <property type="organism name" value="human"/>
</dbReference>
<dbReference type="AGR" id="HGNC:29812"/>
<dbReference type="CTD" id="28960"/>
<dbReference type="DisGeNET" id="28960"/>
<dbReference type="GeneCards" id="DCPS"/>
<dbReference type="HGNC" id="HGNC:29812">
    <property type="gene designation" value="DCPS"/>
</dbReference>
<dbReference type="HPA" id="ENSG00000110063">
    <property type="expression patterns" value="Tissue enhanced (liver)"/>
</dbReference>
<dbReference type="MalaCards" id="DCPS"/>
<dbReference type="MIM" id="610534">
    <property type="type" value="gene"/>
</dbReference>
<dbReference type="MIM" id="616459">
    <property type="type" value="phenotype"/>
</dbReference>
<dbReference type="neXtProt" id="NX_Q96C86"/>
<dbReference type="OpenTargets" id="ENSG00000110063"/>
<dbReference type="Orphanet" id="88616">
    <property type="disease" value="Autosomal recessive non-syndromic intellectual disability"/>
</dbReference>
<dbReference type="PharmGKB" id="PA134863866"/>
<dbReference type="VEuPathDB" id="HostDB:ENSG00000110063"/>
<dbReference type="eggNOG" id="KOG3969">
    <property type="taxonomic scope" value="Eukaryota"/>
</dbReference>
<dbReference type="GeneTree" id="ENSGT00390000003924"/>
<dbReference type="HOGENOM" id="CLU_041045_2_0_1"/>
<dbReference type="InParanoid" id="Q96C86"/>
<dbReference type="OMA" id="HVHINPI"/>
<dbReference type="OrthoDB" id="10264956at2759"/>
<dbReference type="PAN-GO" id="Q96C86">
    <property type="GO annotations" value="5 GO annotations based on evolutionary models"/>
</dbReference>
<dbReference type="PhylomeDB" id="Q96C86"/>
<dbReference type="TreeFam" id="TF105622"/>
<dbReference type="BRENDA" id="3.6.1.59">
    <property type="organism ID" value="2681"/>
</dbReference>
<dbReference type="PathwayCommons" id="Q96C86"/>
<dbReference type="Reactome" id="R-HSA-429958">
    <property type="pathway name" value="mRNA decay by 3' to 5' exoribonuclease"/>
</dbReference>
<dbReference type="SignaLink" id="Q96C86"/>
<dbReference type="BioGRID-ORCS" id="28960">
    <property type="hits" value="258 hits in 1184 CRISPR screens"/>
</dbReference>
<dbReference type="ChiTaRS" id="DCPS">
    <property type="organism name" value="human"/>
</dbReference>
<dbReference type="EvolutionaryTrace" id="Q96C86"/>
<dbReference type="GeneWiki" id="DCPS_(gene)"/>
<dbReference type="GenomeRNAi" id="28960"/>
<dbReference type="Pharos" id="Q96C86">
    <property type="development level" value="Tchem"/>
</dbReference>
<dbReference type="PRO" id="PR:Q96C86"/>
<dbReference type="Proteomes" id="UP000005640">
    <property type="component" value="Chromosome 11"/>
</dbReference>
<dbReference type="RNAct" id="Q96C86">
    <property type="molecule type" value="protein"/>
</dbReference>
<dbReference type="Bgee" id="ENSG00000110063">
    <property type="expression patterns" value="Expressed in right lobe of liver and 156 other cell types or tissues"/>
</dbReference>
<dbReference type="ExpressionAtlas" id="Q96C86">
    <property type="expression patterns" value="baseline and differential"/>
</dbReference>
<dbReference type="GO" id="GO:0005737">
    <property type="term" value="C:cytoplasm"/>
    <property type="evidence" value="ECO:0000314"/>
    <property type="project" value="UniProtKB"/>
</dbReference>
<dbReference type="GO" id="GO:0005829">
    <property type="term" value="C:cytosol"/>
    <property type="evidence" value="ECO:0000314"/>
    <property type="project" value="HPA"/>
</dbReference>
<dbReference type="GO" id="GO:0005739">
    <property type="term" value="C:mitochondrion"/>
    <property type="evidence" value="ECO:0000314"/>
    <property type="project" value="HPA"/>
</dbReference>
<dbReference type="GO" id="GO:0005654">
    <property type="term" value="C:nucleoplasm"/>
    <property type="evidence" value="ECO:0000314"/>
    <property type="project" value="HPA"/>
</dbReference>
<dbReference type="GO" id="GO:0005634">
    <property type="term" value="C:nucleus"/>
    <property type="evidence" value="ECO:0000314"/>
    <property type="project" value="UniProtKB"/>
</dbReference>
<dbReference type="GO" id="GO:0000932">
    <property type="term" value="C:P-body"/>
    <property type="evidence" value="ECO:0000318"/>
    <property type="project" value="GO_Central"/>
</dbReference>
<dbReference type="GO" id="GO:0140932">
    <property type="term" value="F:5'-(N(7)-methyl 5'-triphosphoguanosine)-[mRNA] diphosphatase activity"/>
    <property type="evidence" value="ECO:0000314"/>
    <property type="project" value="UniProtKB"/>
</dbReference>
<dbReference type="GO" id="GO:0042802">
    <property type="term" value="F:identical protein binding"/>
    <property type="evidence" value="ECO:0000353"/>
    <property type="project" value="IntAct"/>
</dbReference>
<dbReference type="GO" id="GO:0000340">
    <property type="term" value="F:RNA 7-methylguanosine cap binding"/>
    <property type="evidence" value="ECO:0000314"/>
    <property type="project" value="UniProtKB"/>
</dbReference>
<dbReference type="GO" id="GO:0004532">
    <property type="term" value="F:RNA exonuclease activity"/>
    <property type="evidence" value="ECO:0000304"/>
    <property type="project" value="Reactome"/>
</dbReference>
<dbReference type="GO" id="GO:0000290">
    <property type="term" value="P:deadenylation-dependent decapping of nuclear-transcribed mRNA"/>
    <property type="evidence" value="ECO:0000318"/>
    <property type="project" value="GO_Central"/>
</dbReference>
<dbReference type="GO" id="GO:0045292">
    <property type="term" value="P:mRNA cis splicing, via spliceosome"/>
    <property type="evidence" value="ECO:0000314"/>
    <property type="project" value="UniProtKB"/>
</dbReference>
<dbReference type="GO" id="GO:0110156">
    <property type="term" value="P:mRNA methylguanosine-cap decapping"/>
    <property type="evidence" value="ECO:0000314"/>
    <property type="project" value="WormBase"/>
</dbReference>
<dbReference type="GO" id="GO:0000288">
    <property type="term" value="P:nuclear-transcribed mRNA catabolic process, deadenylation-dependent decay"/>
    <property type="evidence" value="ECO:0000304"/>
    <property type="project" value="UniProtKB"/>
</dbReference>
<dbReference type="FunFam" id="3.30.200.40:FF:000001">
    <property type="entry name" value="m7GpppX diphosphatase"/>
    <property type="match status" value="1"/>
</dbReference>
<dbReference type="FunFam" id="3.30.428.10:FF:000006">
    <property type="entry name" value="m7GpppX diphosphatase"/>
    <property type="match status" value="1"/>
</dbReference>
<dbReference type="Gene3D" id="3.30.428.10">
    <property type="entry name" value="HIT-like"/>
    <property type="match status" value="1"/>
</dbReference>
<dbReference type="Gene3D" id="3.30.200.40">
    <property type="entry name" value="Scavenger mRNA decapping enzyme, N-terminal domain"/>
    <property type="match status" value="1"/>
</dbReference>
<dbReference type="InterPro" id="IPR008594">
    <property type="entry name" value="DcpS/DCS2"/>
</dbReference>
<dbReference type="InterPro" id="IPR019808">
    <property type="entry name" value="Histidine_triad_CS"/>
</dbReference>
<dbReference type="InterPro" id="IPR036265">
    <property type="entry name" value="HIT-like_sf"/>
</dbReference>
<dbReference type="InterPro" id="IPR011145">
    <property type="entry name" value="Scavenger_mRNA_decap_enz_N"/>
</dbReference>
<dbReference type="PANTHER" id="PTHR12978">
    <property type="entry name" value="HISTIDINE TRIAD HIT PROTEIN MEMBER"/>
    <property type="match status" value="1"/>
</dbReference>
<dbReference type="PANTHER" id="PTHR12978:SF0">
    <property type="entry name" value="M7GPPPX DIPHOSPHATASE"/>
    <property type="match status" value="1"/>
</dbReference>
<dbReference type="Pfam" id="PF05652">
    <property type="entry name" value="DcpS"/>
    <property type="match status" value="1"/>
</dbReference>
<dbReference type="Pfam" id="PF11969">
    <property type="entry name" value="DcpS_C"/>
    <property type="match status" value="1"/>
</dbReference>
<dbReference type="PIRSF" id="PIRSF028973">
    <property type="entry name" value="Scavenger_mRNA_decap_enz"/>
    <property type="match status" value="1"/>
</dbReference>
<dbReference type="SUPFAM" id="SSF54197">
    <property type="entry name" value="HIT-like"/>
    <property type="match status" value="1"/>
</dbReference>
<dbReference type="SUPFAM" id="SSF102860">
    <property type="entry name" value="mRNA decapping enzyme DcpS N-terminal domain"/>
    <property type="match status" value="1"/>
</dbReference>
<dbReference type="PROSITE" id="PS00892">
    <property type="entry name" value="HIT_1"/>
    <property type="match status" value="1"/>
</dbReference>
<proteinExistence type="evidence at protein level"/>
<reference key="1">
    <citation type="submission" date="2001-06" db="EMBL/GenBank/DDBJ databases">
        <title>Cloning and characterization of a novel member of the histidine triad protein family (HINT-5) in different vertebrate species.</title>
        <authorList>
            <person name="Huang C.-H."/>
            <person name="Peng J."/>
            <person name="Chen H."/>
            <person name="Chen Y."/>
        </authorList>
    </citation>
    <scope>NUCLEOTIDE SEQUENCE [GENOMIC DNA / MRNA]</scope>
</reference>
<reference key="2">
    <citation type="journal article" date="2002" name="EMBO J.">
        <title>The scavenger mRNA decapping enzyme DcpS is a member of the HIT family of pyrophosphatases.</title>
        <authorList>
            <person name="Liu H."/>
            <person name="Rodgers N.D."/>
            <person name="Jiao X."/>
            <person name="Kiledjian M."/>
        </authorList>
    </citation>
    <scope>NUCLEOTIDE SEQUENCE [MRNA]</scope>
    <scope>FUNCTION</scope>
    <scope>IDENTIFICATION BY MASS SPECTROMETRY</scope>
    <scope>MUTAGENESIS OF HIS-277</scope>
    <scope>SUBUNIT</scope>
</reference>
<reference key="3">
    <citation type="journal article" date="2003" name="J. Biol. Chem.">
        <title>Coordinate expression of NADPH-dependent flavin reductase, Fre-1, and Hint-related 7meGMP-directed hydrolase, DCS-1.</title>
        <authorList>
            <person name="Kwasnicka D.A."/>
            <person name="Krakowiak A."/>
            <person name="Thacker C."/>
            <person name="Brenner C."/>
            <person name="Vincent S.R."/>
        </authorList>
    </citation>
    <scope>NUCLEOTIDE SEQUENCE [MRNA]</scope>
    <scope>FUNCTION</scope>
    <scope>SUBCELLULAR LOCATION</scope>
    <scope>TISSUE SPECIFICITY</scope>
    <source>
        <tissue>Placenta</tissue>
    </source>
</reference>
<reference key="4">
    <citation type="journal article" date="2000" name="Genome Res.">
        <title>Cloning and functional analysis of cDNAs with open reading frames for 300 previously undefined genes expressed in CD34+ hematopoietic stem/progenitor cells.</title>
        <authorList>
            <person name="Zhang Q.-H."/>
            <person name="Ye M."/>
            <person name="Wu X.-Y."/>
            <person name="Ren S.-X."/>
            <person name="Zhao M."/>
            <person name="Zhao C.-J."/>
            <person name="Fu G."/>
            <person name="Shen Y."/>
            <person name="Fan H.-Y."/>
            <person name="Lu G."/>
            <person name="Zhong M."/>
            <person name="Xu X.-R."/>
            <person name="Han Z.-G."/>
            <person name="Zhang J.-W."/>
            <person name="Tao J."/>
            <person name="Huang Q.-H."/>
            <person name="Zhou J."/>
            <person name="Hu G.-X."/>
            <person name="Gu J."/>
            <person name="Chen S.-J."/>
            <person name="Chen Z."/>
        </authorList>
    </citation>
    <scope>NUCLEOTIDE SEQUENCE [LARGE SCALE MRNA]</scope>
    <source>
        <tissue>Umbilical cord blood</tissue>
    </source>
</reference>
<reference key="5">
    <citation type="journal article" date="2004" name="Genome Res.">
        <title>The status, quality, and expansion of the NIH full-length cDNA project: the Mammalian Gene Collection (MGC).</title>
        <authorList>
            <consortium name="The MGC Project Team"/>
        </authorList>
    </citation>
    <scope>NUCLEOTIDE SEQUENCE [LARGE SCALE MRNA]</scope>
    <scope>VARIANT GLU-73</scope>
    <source>
        <tissue>Bone marrow</tissue>
    </source>
</reference>
<reference key="6">
    <citation type="submission" date="2010-01" db="UniProtKB">
        <authorList>
            <person name="Bienvenut W.V."/>
        </authorList>
    </citation>
    <scope>PROTEIN SEQUENCE OF 2-11; 129-138 AND 243-255</scope>
    <scope>CLEAVAGE OF INITIATOR METHIONINE</scope>
    <scope>ACETYLATION AT ALA-2</scope>
    <scope>IDENTIFICATION BY MASS SPECTROMETRY</scope>
    <source>
        <tissue>Ovarian carcinoma</tissue>
    </source>
</reference>
<reference key="7">
    <citation type="journal article" date="2001" name="Cell">
        <title>Functional link between the mammalian exosome and mRNA decapping.</title>
        <authorList>
            <person name="Wang Z."/>
            <person name="Kiledjian M."/>
        </authorList>
    </citation>
    <scope>FUNCTION</scope>
    <scope>INTERACTION WITH EXOSOME PROTEINS</scope>
</reference>
<reference key="8">
    <citation type="journal article" date="2003" name="Proc. Natl. Acad. Sci. U.S.A.">
        <title>DcpS can act in the 5'-3' mRNA decay pathway in addition to the 3'-5' pathway.</title>
        <authorList>
            <person name="van Dijk E."/>
            <person name="Le Hir H."/>
            <person name="Seraphin B."/>
        </authorList>
    </citation>
    <scope>FUNCTION</scope>
</reference>
<reference key="9">
    <citation type="journal article" date="2004" name="RNA">
        <title>Functional analysis of mRNA scavenger decapping enzymes.</title>
        <authorList>
            <person name="Liu S.-W."/>
            <person name="Jiao X."/>
            <person name="Liu H."/>
            <person name="Gu M."/>
            <person name="Lima C.D."/>
            <person name="Kiledjian M."/>
        </authorList>
    </citation>
    <scope>FUNCTION</scope>
    <scope>CATALYTIC ACTIVITY</scope>
    <scope>SUBSTRATE SPECIFICITY</scope>
    <scope>DOMAIN</scope>
    <scope>SUBCELLULAR LOCATION</scope>
    <scope>MUTAGENESIS OF HIS-277</scope>
</reference>
<reference key="10">
    <citation type="journal article" date="2004" name="RNA">
        <title>Nematode m7GpppG and m3(2,2,7)GpppG decapping: activities in Ascaris embryos and characterization of C. elegans scavenger DcpS.</title>
        <authorList>
            <person name="Cohen L.S."/>
            <person name="Mikhli C."/>
            <person name="Friedman C."/>
            <person name="Jankowska-Anyszka M."/>
            <person name="Stepinski J."/>
            <person name="Darzynkiewicz E."/>
            <person name="Davis R.E."/>
        </authorList>
    </citation>
    <scope>FUNCTION</scope>
    <scope>CATALYTIC ACTIVITY</scope>
    <scope>SUBSTRATE SPECIFICITY</scope>
</reference>
<reference key="11">
    <citation type="journal article" date="2005" name="Biochem. Biophys. Res. Commun.">
        <title>Role of a novel dual flavin reductase (NR1) and an associated histidine triad protein (DCS-1) in menadione-induced cytotoxicity.</title>
        <authorList>
            <person name="Kwasnicka-Crawford D.A."/>
            <person name="Vincent S.R."/>
        </authorList>
    </citation>
    <scope>FUNCTION IN CYTOTOXICITY INHIBITION</scope>
    <scope>INDUCTION</scope>
    <scope>INTERACTION WITH NDOR1</scope>
</reference>
<reference key="12">
    <citation type="journal article" date="2008" name="RNA">
        <title>DcpS scavenger decapping enzyme can modulate pre-mRNA splicing.</title>
        <authorList>
            <person name="Shen V."/>
            <person name="Liu H."/>
            <person name="Liu S.W."/>
            <person name="Jiao X."/>
            <person name="Kiledjian M."/>
        </authorList>
    </citation>
    <scope>FUNCTION IN SPLICING</scope>
    <scope>MUTAGENESIS OF 10-LYS--ARG-13; LEU-148 AND LEU-150</scope>
    <scope>SUBCELLULAR LOCATION</scope>
</reference>
<reference key="13">
    <citation type="journal article" date="2009" name="Anal. Chem.">
        <title>Lys-N and trypsin cover complementary parts of the phosphoproteome in a refined SCX-based approach.</title>
        <authorList>
            <person name="Gauci S."/>
            <person name="Helbig A.O."/>
            <person name="Slijper M."/>
            <person name="Krijgsveld J."/>
            <person name="Heck A.J."/>
            <person name="Mohammed S."/>
        </authorList>
    </citation>
    <scope>ACETYLATION [LARGE SCALE ANALYSIS] AT ALA-2</scope>
    <scope>CLEAVAGE OF INITIATOR METHIONINE [LARGE SCALE ANALYSIS]</scope>
    <scope>IDENTIFICATION BY MASS SPECTROMETRY [LARGE SCALE ANALYSIS]</scope>
</reference>
<reference key="14">
    <citation type="journal article" date="2009" name="Biochimie">
        <title>Proteomic approach to the identification of novel delta-lactoferrin target genes: Characterization of DcpS, an mRNA scavenger decapping enzyme.</title>
        <authorList>
            <person name="Mariller C."/>
            <person name="Hardiville S."/>
            <person name="Hoedt E."/>
            <person name="Benaissa M."/>
            <person name="Mazurier J."/>
            <person name="Pierce A."/>
        </authorList>
    </citation>
    <scope>INDUCTION</scope>
    <scope>IDENTIFICATION BY MASS SPECTROMETRY</scope>
</reference>
<reference key="15">
    <citation type="journal article" date="2009" name="Science">
        <title>Lysine acetylation targets protein complexes and co-regulates major cellular functions.</title>
        <authorList>
            <person name="Choudhary C."/>
            <person name="Kumar C."/>
            <person name="Gnad F."/>
            <person name="Nielsen M.L."/>
            <person name="Rehman M."/>
            <person name="Walther T.C."/>
            <person name="Olsen J.V."/>
            <person name="Mann M."/>
        </authorList>
    </citation>
    <scope>ACETYLATION [LARGE SCALE ANALYSIS] AT LYS-138 AND LYS-142</scope>
    <scope>IDENTIFICATION BY MASS SPECTROMETRY [LARGE SCALE ANALYSIS]</scope>
</reference>
<reference key="16">
    <citation type="journal article" date="2011" name="BMC Syst. Biol.">
        <title>Initial characterization of the human central proteome.</title>
        <authorList>
            <person name="Burkard T.R."/>
            <person name="Planyavsky M."/>
            <person name="Kaupe I."/>
            <person name="Breitwieser F.P."/>
            <person name="Buerckstuemmer T."/>
            <person name="Bennett K.L."/>
            <person name="Superti-Furga G."/>
            <person name="Colinge J."/>
        </authorList>
    </citation>
    <scope>IDENTIFICATION BY MASS SPECTROMETRY [LARGE SCALE ANALYSIS]</scope>
</reference>
<reference key="17">
    <citation type="journal article" date="2012" name="Biochemistry">
        <title>7-Methylguanosine diphosphate (m(7)GDP) is not hydrolyzed but strongly bound by decapping scavenger (dcpS) enzymes and potently inhibits their activity.</title>
        <authorList>
            <person name="Wypijewska A."/>
            <person name="Bojarska E."/>
            <person name="Lukaszewicz M."/>
            <person name="Stepinski J."/>
            <person name="Jemielity J."/>
            <person name="Davis R.E."/>
            <person name="Darzynkiewicz E."/>
        </authorList>
    </citation>
    <scope>FUNCTION</scope>
    <scope>CATALYTIC ACTIVITY</scope>
    <scope>SUBSTRATE SPECIFICITY</scope>
    <scope>ACTIVITY REGULATION</scope>
</reference>
<reference key="18">
    <citation type="journal article" date="2012" name="Mol. Cell. Proteomics">
        <title>Comparative large-scale characterisation of plant vs. mammal proteins reveals similar and idiosyncratic N-alpha acetylation features.</title>
        <authorList>
            <person name="Bienvenut W.V."/>
            <person name="Sumpton D."/>
            <person name="Martinez A."/>
            <person name="Lilla S."/>
            <person name="Espagne C."/>
            <person name="Meinnel T."/>
            <person name="Giglione C."/>
        </authorList>
    </citation>
    <scope>ACETYLATION [LARGE SCALE ANALYSIS] AT ALA-2</scope>
    <scope>CLEAVAGE OF INITIATOR METHIONINE [LARGE SCALE ANALYSIS]</scope>
    <scope>IDENTIFICATION BY MASS SPECTROMETRY [LARGE SCALE ANALYSIS]</scope>
</reference>
<reference key="19">
    <citation type="journal article" date="2012" name="Proc. Natl. Acad. Sci. U.S.A.">
        <title>N-terminal acetylome analyses and functional insights of the N-terminal acetyltransferase NatB.</title>
        <authorList>
            <person name="Van Damme P."/>
            <person name="Lasa M."/>
            <person name="Polevoda B."/>
            <person name="Gazquez C."/>
            <person name="Elosegui-Artola A."/>
            <person name="Kim D.S."/>
            <person name="De Juan-Pardo E."/>
            <person name="Demeyer K."/>
            <person name="Hole K."/>
            <person name="Larrea E."/>
            <person name="Timmerman E."/>
            <person name="Prieto J."/>
            <person name="Arnesen T."/>
            <person name="Sherman F."/>
            <person name="Gevaert K."/>
            <person name="Aldabe R."/>
        </authorList>
    </citation>
    <scope>ACETYLATION [LARGE SCALE ANALYSIS] AT ALA-2</scope>
    <scope>CLEAVAGE OF INITIATOR METHIONINE [LARGE SCALE ANALYSIS]</scope>
    <scope>IDENTIFICATION BY MASS SPECTROMETRY [LARGE SCALE ANALYSIS]</scope>
</reference>
<reference key="20">
    <citation type="journal article" date="2013" name="J. Proteome Res.">
        <title>Toward a comprehensive characterization of a human cancer cell phosphoproteome.</title>
        <authorList>
            <person name="Zhou H."/>
            <person name="Di Palma S."/>
            <person name="Preisinger C."/>
            <person name="Peng M."/>
            <person name="Polat A.N."/>
            <person name="Heck A.J."/>
            <person name="Mohammed S."/>
        </authorList>
    </citation>
    <scope>PHOSPHORYLATION [LARGE SCALE ANALYSIS] AT SER-24</scope>
    <scope>IDENTIFICATION BY MASS SPECTROMETRY [LARGE SCALE ANALYSIS]</scope>
    <source>
        <tissue>Erythroleukemia</tissue>
    </source>
</reference>
<reference key="21">
    <citation type="journal article" date="2014" name="J. Proteomics">
        <title>An enzyme assisted RP-RPLC approach for in-depth analysis of human liver phosphoproteome.</title>
        <authorList>
            <person name="Bian Y."/>
            <person name="Song C."/>
            <person name="Cheng K."/>
            <person name="Dong M."/>
            <person name="Wang F."/>
            <person name="Huang J."/>
            <person name="Sun D."/>
            <person name="Wang L."/>
            <person name="Ye M."/>
            <person name="Zou H."/>
        </authorList>
    </citation>
    <scope>IDENTIFICATION BY MASS SPECTROMETRY [LARGE SCALE ANALYSIS]</scope>
    <source>
        <tissue>Liver</tissue>
    </source>
</reference>
<reference key="22">
    <citation type="journal article" date="2015" name="Hum. Mol. Genet.">
        <title>Loss of the scavenger mRNA decapping enzyme DCPS causes syndromic intellectual disability with neuromuscular defects.</title>
        <authorList>
            <person name="Ng C.K."/>
            <person name="Shboul M."/>
            <person name="Taverniti V."/>
            <person name="Bonnard C."/>
            <person name="Lee H."/>
            <person name="Eskin A."/>
            <person name="Nelson S.F."/>
            <person name="Al-Raqad M."/>
            <person name="Altawalbeh S."/>
            <person name="Seraphin B."/>
            <person name="Reversade B."/>
        </authorList>
    </citation>
    <scope>INVOLVEMENT IN ARS</scope>
</reference>
<reference key="23">
    <citation type="journal article" date="2015" name="Hum. Mol. Genet.">
        <title>Mutations in DCPS and EDC3 in autosomal recessive intellectual disability indicate a crucial role for mRNA decapping in neurodevelopment.</title>
        <authorList>
            <person name="Ahmed I."/>
            <person name="Buchert R."/>
            <person name="Zhou M."/>
            <person name="Jiao X."/>
            <person name="Mittal K."/>
            <person name="Sheikh T.I."/>
            <person name="Scheller U."/>
            <person name="Vasli N."/>
            <person name="Rafiq M.A."/>
            <person name="Brohi M.Q."/>
            <person name="Mikhailov A."/>
            <person name="Ayaz M."/>
            <person name="Bhatti A."/>
            <person name="Sticht H."/>
            <person name="Nasr T."/>
            <person name="Carter M.T."/>
            <person name="Uebe S."/>
            <person name="Reis A."/>
            <person name="Ayub M."/>
            <person name="John P."/>
            <person name="Kiledjian M."/>
            <person name="Vincent J.B."/>
            <person name="Jamra R.A."/>
        </authorList>
    </citation>
    <scope>INVOLVEMENT IN ARS</scope>
    <scope>VARIANT ARS MET-316</scope>
    <scope>CHARACTERIZATION OF VARIANT ARS MET-316</scope>
</reference>
<reference key="24">
    <citation type="journal article" date="2004" name="Mol. Cell">
        <title>Insights into the structure, mechanism, and regulation of scavenger mRNA decapping activity.</title>
        <authorList>
            <person name="Gu M."/>
            <person name="Fabrega C."/>
            <person name="Liu S.-W."/>
            <person name="Liu H."/>
            <person name="Kiledjian M."/>
            <person name="Lima C.D."/>
        </authorList>
    </citation>
    <scope>X-RAY CRYSTALLOGRAPHY (1.9 ANGSTROMS) OF MUTANT ASN-277 IN COMPLEX WITH SUBSTRATE</scope>
    <scope>SUBUNIT</scope>
    <scope>MUTAGENESIS OF ARG-58; ILE-61; PHE-63; ILE-83; GLU-85; PHE-108; ASN-110; TYR-113; LYS-128; LYS-138; ARG-145; GLN-146; TRP-175; GLU-185; PRO-204; ASP-205; LEU-206; LYS-207; TYR-217; HIS-268; SER-272; HIS-277; HIS-279; ARG-294 AND ARG-322</scope>
</reference>
<reference key="25">
    <citation type="journal article" date="2005" name="J. Mol. Biol.">
        <title>Crystal structures of human DcpS in ligand-free and m7GDP-bound forms suggest a dynamic mechanism for scavenger mRNA decapping.</title>
        <authorList>
            <person name="Chen N."/>
            <person name="Walsh M.A."/>
            <person name="Liu Y."/>
            <person name="Parker R."/>
            <person name="Song H."/>
        </authorList>
    </citation>
    <scope>X-RAY CRYSTALLOGRAPHY (2.0 ANGSTROMS) IN COMPLEX WITH SUBSTRATE</scope>
    <scope>FUNCTION</scope>
    <scope>SUBUNIT</scope>
    <scope>MUTAGENESIS OF TYR-273</scope>
</reference>
<reference key="26">
    <citation type="journal article" date="2008" name="ACS Chem. Biol.">
        <title>DcpS as a therapeutic target for spinal muscular atrophy.</title>
        <authorList>
            <person name="Singh J."/>
            <person name="Salcius M."/>
            <person name="Liu S.W."/>
            <person name="Staker B.L."/>
            <person name="Mishra R."/>
            <person name="Thurmond J."/>
            <person name="Michaud G."/>
            <person name="Mattoon D.R."/>
            <person name="Printen J."/>
            <person name="Christensen J."/>
            <person name="Bjornsson J.M."/>
            <person name="Pollok B.A."/>
            <person name="Kiledjian M."/>
            <person name="Stewart L."/>
            <person name="Jarecki J."/>
            <person name="Gurney M.E."/>
        </authorList>
    </citation>
    <scope>X-RAY CRYSTALLOGRAPHY (1.8 ANGSTROMS) OF 38-337 IN COMPLEX WITH SUBSTRATE ANALOGS</scope>
    <scope>CATALYTIC ACTIVITY</scope>
    <scope>ACTIVITY REGULATION</scope>
</reference>
<evidence type="ECO:0000250" key="1">
    <source>
        <dbReference type="UniProtKB" id="Q9DAR7"/>
    </source>
</evidence>
<evidence type="ECO:0000256" key="2">
    <source>
        <dbReference type="SAM" id="MobiDB-lite"/>
    </source>
</evidence>
<evidence type="ECO:0000269" key="3">
    <source>
    </source>
</evidence>
<evidence type="ECO:0000269" key="4">
    <source>
    </source>
</evidence>
<evidence type="ECO:0000269" key="5">
    <source>
    </source>
</evidence>
<evidence type="ECO:0000269" key="6">
    <source>
    </source>
</evidence>
<evidence type="ECO:0000269" key="7">
    <source>
    </source>
</evidence>
<evidence type="ECO:0000269" key="8">
    <source>
    </source>
</evidence>
<evidence type="ECO:0000269" key="9">
    <source>
    </source>
</evidence>
<evidence type="ECO:0000269" key="10">
    <source>
    </source>
</evidence>
<evidence type="ECO:0000269" key="11">
    <source>
    </source>
</evidence>
<evidence type="ECO:0000269" key="12">
    <source>
    </source>
</evidence>
<evidence type="ECO:0000269" key="13">
    <source>
    </source>
</evidence>
<evidence type="ECO:0000269" key="14">
    <source>
    </source>
</evidence>
<evidence type="ECO:0000269" key="15">
    <source>
    </source>
</evidence>
<evidence type="ECO:0000269" key="16">
    <source>
    </source>
</evidence>
<evidence type="ECO:0000269" key="17">
    <source>
    </source>
</evidence>
<evidence type="ECO:0000269" key="18">
    <source>
    </source>
</evidence>
<evidence type="ECO:0000269" key="19">
    <source ref="6"/>
</evidence>
<evidence type="ECO:0000305" key="20"/>
<evidence type="ECO:0007744" key="21">
    <source>
    </source>
</evidence>
<evidence type="ECO:0007744" key="22">
    <source>
    </source>
</evidence>
<evidence type="ECO:0007744" key="23">
    <source>
    </source>
</evidence>
<evidence type="ECO:0007744" key="24">
    <source>
    </source>
</evidence>
<evidence type="ECO:0007744" key="25">
    <source>
    </source>
</evidence>
<evidence type="ECO:0007829" key="26">
    <source>
        <dbReference type="PDB" id="1ST0"/>
    </source>
</evidence>
<evidence type="ECO:0007829" key="27">
    <source>
        <dbReference type="PDB" id="1XML"/>
    </source>
</evidence>
<evidence type="ECO:0007829" key="28">
    <source>
        <dbReference type="PDB" id="3BL9"/>
    </source>
</evidence>
<sequence length="337" mass="38609">MADAAPQLGKRKRELDVEEAHAASTEEKEAGVGNGTCAPVRLPFSGFRLQKVLRESARDKIIFLHGKVNEASGDGDGEDAVVILEKTPFQVEQVAQLLTGSPELQLQFSNDIYSTYHLFPPRQLNDVKTTVVYPATEKHLQKYLRQDLRLIRETGDDYRNITLPHLESQSLSIQWVYNILDKKAEADRIVFENPDPSDGFVLIPDLKWNQQQLDDLYLIAICHRRGIRSLRDLTPEHLPLLRNILHQGQEAILQRYRMKGDHLRVYLHYLPSYYHLHVHFTALGFEAPGSGVERAHLLAEVIENLECDPRHYQQRTLTFALRADDPLLKLLQEAQQS</sequence>
<comment type="function">
    <text evidence="3 4 5 6 8 9 11 12 13 16">Decapping scavenger enzyme that catalyzes the cleavage of a residual cap structure following the degradation of mRNAs by the 3'-&gt;5' exosome-mediated mRNA decay pathway. Hydrolyzes cap analog structures like 7-methylguanosine nucleoside triphosphate (m7GpppG) with up to 10 nucleotide substrates (small capped oligoribonucleotides) and specifically releases 5'-phosphorylated RNA fragments and 7-methylguanosine monophosphate (m7GMP). Cleaves cap analog structures like tri-methyl guanosine nucleoside triphosphate (m3(2,2,7)GpppG) with very poor efficiency. Does not hydrolyze unmethylated cap analog (GpppG) and shows no decapping activity on intact m7GpppG-capped mRNA molecules longer than 25 nucleotides. Does not hydrolyze 7-methylguanosine diphosphate (m7GDP) to m7GMP (PubMed:22985415). May also play a role in the 5'-&gt;3 mRNA decay pathway; m7GDP, the downstream product released by the 5'-&gt;3' mRNA mediated decapping activity, may be also converted by DCPS to m7GMP (PubMed:14523240). Binds to m7GpppG and strongly to m7GDP. Plays a role in first intron splicing of pre-mRNAs. Inhibits activation-induced cell death.</text>
</comment>
<comment type="catalytic activity">
    <reaction evidence="8 9 15 16">
        <text>a 5'-end (N(7)-methyl 5'-triphosphoguanosine)-ribonucleoside in mRNA + H2O = N(7)-methyl-GMP + a 5'-end diphospho-ribonucleoside in mRNA + 2 H(+)</text>
        <dbReference type="Rhea" id="RHEA:65388"/>
        <dbReference type="Rhea" id="RHEA-COMP:17165"/>
        <dbReference type="Rhea" id="RHEA-COMP:17167"/>
        <dbReference type="ChEBI" id="CHEBI:15377"/>
        <dbReference type="ChEBI" id="CHEBI:15378"/>
        <dbReference type="ChEBI" id="CHEBI:58285"/>
        <dbReference type="ChEBI" id="CHEBI:156461"/>
        <dbReference type="ChEBI" id="CHEBI:167616"/>
        <dbReference type="EC" id="3.6.1.59"/>
    </reaction>
</comment>
<comment type="activity regulation">
    <text evidence="15 16">The hydrolytic product 7-methylguanosine diphosphate (m7GDP) efficiently inhibits the decapping scavenger activity and acts as a competitive inhibitor in vitro. Inhibited by 2,4-diaminoquinazoline.</text>
</comment>
<comment type="subunit">
    <text evidence="3 4 7 11 12 15">Homodimer. Associates with components of the exosome multienzyme ribonuclease complex, such as EXOSC3 and EXOSC4. Interacts with NDOR1.</text>
</comment>
<comment type="interaction">
    <interactant intactId="EBI-3917181">
        <id>Q96C86</id>
    </interactant>
    <interactant intactId="EBI-3917181">
        <id>Q96C86</id>
        <label>DCPS</label>
    </interactant>
    <organismsDiffer>false</organismsDiffer>
    <experiments>3</experiments>
</comment>
<comment type="interaction">
    <interactant intactId="EBI-3917181">
        <id>Q96C86</id>
    </interactant>
    <interactant intactId="EBI-349938">
        <id>P52292</id>
        <label>KPNA2</label>
    </interactant>
    <organismsDiffer>false</organismsDiffer>
    <experiments>3</experiments>
</comment>
<comment type="interaction">
    <interactant intactId="EBI-3917181">
        <id>Q96C86</id>
    </interactant>
    <interactant intactId="EBI-540602">
        <id>O15131</id>
        <label>KPNA5</label>
    </interactant>
    <organismsDiffer>false</organismsDiffer>
    <experiments>3</experiments>
</comment>
<comment type="interaction">
    <interactant intactId="EBI-3917181">
        <id>Q96C86</id>
    </interactant>
    <interactant intactId="EBI-359923">
        <id>O60684</id>
        <label>KPNA6</label>
    </interactant>
    <organismsDiffer>false</organismsDiffer>
    <experiments>5</experiments>
</comment>
<comment type="subcellular location">
    <subcellularLocation>
        <location>Cytoplasm</location>
    </subcellularLocation>
    <subcellularLocation>
        <location>Nucleus</location>
    </subcellularLocation>
    <text>Predominantly localized in the nucleus. Nucleocytoplasmic shuttling protein that can transiently enter the cytoplasm in mammalian cells in a XPO1/CRM1-dependent manner.</text>
</comment>
<comment type="tissue specificity">
    <text evidence="5">Detected in liver, brain, kidney, testis and prostate.</text>
</comment>
<comment type="induction">
    <text evidence="12 14">Up-regulated by menadione. Up-regulated by the transcription factor LTF isoform delta-lactoferrin (at protein level).</text>
</comment>
<comment type="domain">
    <text evidence="8">The C-terminal histidine triad (HIT) motif and the N-terminal domain are required for the decapping activity. The N-terminus is necessary but not sufficient for binding cap structures.</text>
</comment>
<comment type="disease" evidence="17 18">
    <disease id="DI-04480">
        <name>Al-Raqad syndrome</name>
        <acronym>ARS</acronym>
        <description>A syndrome characterized by delayed psychomotor development, moderate to severe intellectual disability, poor or absent speech, microcephaly, congenital hypotonia, and severe growth delay.</description>
        <dbReference type="MIM" id="616459"/>
    </disease>
    <text>The disease is caused by variants affecting the gene represented in this entry.</text>
</comment>
<comment type="similarity">
    <text evidence="20">Belongs to the HIT family.</text>
</comment>
<name>DCPS_HUMAN</name>
<keyword id="KW-0002">3D-structure</keyword>
<keyword id="KW-0007">Acetylation</keyword>
<keyword id="KW-0963">Cytoplasm</keyword>
<keyword id="KW-0903">Direct protein sequencing</keyword>
<keyword id="KW-0225">Disease variant</keyword>
<keyword id="KW-0378">Hydrolase</keyword>
<keyword id="KW-0991">Intellectual disability</keyword>
<keyword id="KW-0507">mRNA processing</keyword>
<keyword id="KW-0508">mRNA splicing</keyword>
<keyword id="KW-0539">Nucleus</keyword>
<keyword id="KW-0597">Phosphoprotein</keyword>
<keyword id="KW-1267">Proteomics identification</keyword>
<keyword id="KW-1185">Reference proteome</keyword>
<protein>
    <recommendedName>
        <fullName>m7GpppX diphosphatase</fullName>
        <ecNumber evidence="8 9 15 16">3.6.1.59</ecNumber>
    </recommendedName>
    <alternativeName>
        <fullName>DCS-1</fullName>
    </alternativeName>
    <alternativeName>
        <fullName>Decapping scavenger enzyme</fullName>
    </alternativeName>
    <alternativeName>
        <fullName>Hint-related 7meGMP-directed hydrolase</fullName>
    </alternativeName>
    <alternativeName>
        <fullName>Histidine triad nucleotide-binding protein 5</fullName>
    </alternativeName>
    <alternativeName>
        <fullName>Histidine triad protein member 5</fullName>
        <shortName>HINT-5</shortName>
    </alternativeName>
    <alternativeName>
        <fullName>Scavenger mRNA-decapping enzyme DcpS</fullName>
    </alternativeName>
</protein>
<feature type="initiator methionine" description="Removed" evidence="19 21 23 24">
    <location>
        <position position="1"/>
    </location>
</feature>
<feature type="chain" id="PRO_0000109794" description="m7GpppX diphosphatase">
    <location>
        <begin position="2"/>
        <end position="337"/>
    </location>
</feature>
<feature type="region of interest" description="Disordered" evidence="2">
    <location>
        <begin position="1"/>
        <end position="35"/>
    </location>
</feature>
<feature type="short sequence motif" description="nuclear localization signal (NLS)">
    <location>
        <begin position="10"/>
        <end position="13"/>
    </location>
</feature>
<feature type="short sequence motif" description="nuclear export sequence (NES)">
    <location>
        <begin position="142"/>
        <end position="154"/>
    </location>
</feature>
<feature type="short sequence motif" description="Histidine triad motif">
    <location>
        <begin position="275"/>
        <end position="279"/>
    </location>
</feature>
<feature type="compositionally biased region" description="Basic and acidic residues" evidence="2">
    <location>
        <begin position="13"/>
        <end position="30"/>
    </location>
</feature>
<feature type="active site" description="Nucleophile">
    <location>
        <position position="277"/>
    </location>
</feature>
<feature type="binding site" evidence="7 11">
    <location>
        <position position="175"/>
    </location>
    <ligand>
        <name>substrate</name>
    </ligand>
</feature>
<feature type="binding site" evidence="7 11">
    <location>
        <position position="185"/>
    </location>
    <ligand>
        <name>substrate</name>
    </ligand>
</feature>
<feature type="binding site" evidence="7 11">
    <location>
        <position position="205"/>
    </location>
    <ligand>
        <name>substrate</name>
    </ligand>
</feature>
<feature type="binding site" evidence="7 11">
    <location>
        <position position="207"/>
    </location>
    <ligand>
        <name>substrate</name>
    </ligand>
</feature>
<feature type="binding site">
    <location>
        <begin position="268"/>
        <end position="279"/>
    </location>
    <ligand>
        <name>substrate</name>
    </ligand>
</feature>
<feature type="modified residue" description="N-acetylalanine" evidence="19 21 23 24">
    <location>
        <position position="2"/>
    </location>
</feature>
<feature type="modified residue" description="Phosphoserine" evidence="25">
    <location>
        <position position="24"/>
    </location>
</feature>
<feature type="modified residue" description="Phosphoserine" evidence="1">
    <location>
        <position position="101"/>
    </location>
</feature>
<feature type="modified residue" description="N6-acetyllysine" evidence="22">
    <location>
        <position position="138"/>
    </location>
</feature>
<feature type="modified residue" description="N6-acetyllysine" evidence="22">
    <location>
        <position position="142"/>
    </location>
</feature>
<feature type="sequence variant" id="VAR_027958" description="In dbSNP:rs11557735." evidence="10">
    <original>G</original>
    <variation>E</variation>
    <location>
        <position position="73"/>
    </location>
</feature>
<feature type="sequence variant" id="VAR_073956" description="In ARS; results in a severe decrease of decapase activity; dbSNP:rs137941190." evidence="17">
    <original>T</original>
    <variation>M</variation>
    <location>
        <position position="316"/>
    </location>
</feature>
<feature type="mutagenesis site" description="Increases cytoplasmic localization." evidence="13">
    <location>
        <begin position="10"/>
        <end position="13"/>
    </location>
</feature>
<feature type="mutagenesis site" description="Increases decapping activity to 125% of wild-type." evidence="7">
    <original>R</original>
    <variation>A</variation>
    <location>
        <position position="58"/>
    </location>
</feature>
<feature type="mutagenesis site" description="No effect." evidence="7">
    <original>I</original>
    <variation>A</variation>
    <location>
        <position position="61"/>
    </location>
</feature>
<feature type="mutagenesis site" description="No effect." evidence="7">
    <original>F</original>
    <variation>A</variation>
    <location>
        <position position="63"/>
    </location>
</feature>
<feature type="mutagenesis site" description="Strongly reduces decapping activity." evidence="7">
    <original>I</original>
    <variation>A</variation>
    <location>
        <position position="83"/>
    </location>
</feature>
<feature type="mutagenesis site" description="Reduces decapping activity." evidence="7">
    <original>E</original>
    <variation>A</variation>
    <location>
        <position position="85"/>
    </location>
</feature>
<feature type="mutagenesis site" description="Reduces decapping activity." evidence="7">
    <original>F</original>
    <variation>A</variation>
    <location>
        <position position="108"/>
    </location>
</feature>
<feature type="mutagenesis site" description="Loss of decapping activity." evidence="7">
    <original>N</original>
    <variation>A</variation>
    <location>
        <position position="110"/>
    </location>
</feature>
<feature type="mutagenesis site" description="Loss of decapping activity." evidence="7">
    <original>Y</original>
    <variation>A</variation>
    <location>
        <position position="113"/>
    </location>
</feature>
<feature type="mutagenesis site" description="No effect." evidence="7">
    <original>K</original>
    <variation>A</variation>
    <location>
        <position position="128"/>
    </location>
</feature>
<feature type="mutagenesis site" description="Increases decapping activity to 250% of wild-type." evidence="7">
    <original>K</original>
    <variation>D</variation>
    <location>
        <position position="138"/>
    </location>
</feature>
<feature type="mutagenesis site" description="Increases decapping activity to 180% of wild-type." evidence="7">
    <original>R</original>
    <variation>A</variation>
    <location>
        <position position="145"/>
    </location>
</feature>
<feature type="mutagenesis site" description="Increases decapping activity to 140% of wild-type." evidence="7">
    <original>Q</original>
    <variation>P</variation>
    <location>
        <position position="146"/>
    </location>
</feature>
<feature type="mutagenesis site" description="Inhibits nuclear export to the cytoplasm." evidence="13">
    <original>L</original>
    <variation>A</variation>
    <location>
        <position position="148"/>
    </location>
</feature>
<feature type="mutagenesis site" description="Inhibits nuclear export to the cytoplasm." evidence="13">
    <original>L</original>
    <variation>A</variation>
    <location>
        <position position="150"/>
    </location>
</feature>
<feature type="mutagenesis site" description="Loss of decapping activity." evidence="7">
    <original>W</original>
    <variation>A</variation>
    <location>
        <position position="175"/>
    </location>
</feature>
<feature type="mutagenesis site" description="Loss of decapping activity." evidence="7">
    <original>E</original>
    <variation>A</variation>
    <location>
        <position position="185"/>
    </location>
</feature>
<feature type="mutagenesis site" description="Reduces decapping activity." evidence="7">
    <original>P</original>
    <variation>A</variation>
    <location>
        <position position="204"/>
    </location>
</feature>
<feature type="mutagenesis site" description="Reduces decapping activity." evidence="7">
    <original>D</original>
    <variation>A</variation>
    <location>
        <position position="205"/>
    </location>
</feature>
<feature type="mutagenesis site" description="No effect." evidence="7">
    <original>L</original>
    <variation>A</variation>
    <location>
        <position position="206"/>
    </location>
</feature>
<feature type="mutagenesis site" description="Reduces decapping activity." evidence="7">
    <original>K</original>
    <variation>A</variation>
    <location>
        <position position="207"/>
    </location>
</feature>
<feature type="mutagenesis site" description="No effect." evidence="7">
    <original>K</original>
    <variation>R</variation>
    <location>
        <position position="207"/>
    </location>
</feature>
<feature type="mutagenesis site" description="No effect." evidence="7">
    <original>Y</original>
    <variation>A</variation>
    <location>
        <position position="217"/>
    </location>
</feature>
<feature type="mutagenesis site" description="Reduces decapping activity." evidence="7">
    <original>Y</original>
    <variation>F</variation>
    <location>
        <position position="217"/>
    </location>
</feature>
<feature type="mutagenesis site" description="Loss of decapping activity." evidence="7">
    <original>H</original>
    <variation>N</variation>
    <location>
        <position position="268"/>
    </location>
</feature>
<feature type="mutagenesis site" description="No effect." evidence="7">
    <original>S</original>
    <variation>A</variation>
    <location>
        <position position="272"/>
    </location>
</feature>
<feature type="mutagenesis site" description="Reduces decapping activity." evidence="11">
    <original>Y</original>
    <variation>A</variation>
    <location>
        <position position="273"/>
    </location>
</feature>
<feature type="mutagenesis site" description="Activates decapping activity to 120% of wild-type." evidence="11">
    <original>Y</original>
    <variation>F</variation>
    <location>
        <position position="273"/>
    </location>
</feature>
<feature type="mutagenesis site" description="Loss of decapping activity. Does not inhibit cap structure and capped RNA binding. Preferentially hydrolyzes cap structure (m7GpppG) at least 2500-fold more efficiently than capped RNA (m7Gppp-RNA)." evidence="4 7 8">
    <original>H</original>
    <variation>N</variation>
    <location>
        <position position="277"/>
    </location>
</feature>
<feature type="mutagenesis site" description="Loss of decapping activity." evidence="7">
    <original>H</original>
    <variation>N</variation>
    <location>
        <position position="279"/>
    </location>
</feature>
<feature type="mutagenesis site" description="No effect." evidence="7">
    <original>R</original>
    <variation>A</variation>
    <variation>K</variation>
    <location>
        <position position="294"/>
    </location>
</feature>
<feature type="mutagenesis site" description="No effect." evidence="7">
    <original>R</original>
    <variation>A</variation>
    <location>
        <position position="322"/>
    </location>
</feature>
<feature type="sequence conflict" description="In Ref. 1; AAK91763." evidence="20" ref="1">
    <original>N</original>
    <variation>K</variation>
    <location>
        <position position="69"/>
    </location>
</feature>
<feature type="strand" evidence="26">
    <location>
        <begin position="43"/>
        <end position="45"/>
    </location>
</feature>
<feature type="strand" evidence="28">
    <location>
        <begin position="48"/>
        <end position="56"/>
    </location>
</feature>
<feature type="turn" evidence="28">
    <location>
        <begin position="57"/>
        <end position="60"/>
    </location>
</feature>
<feature type="strand" evidence="28">
    <location>
        <begin position="61"/>
        <end position="67"/>
    </location>
</feature>
<feature type="strand" evidence="28">
    <location>
        <begin position="79"/>
        <end position="86"/>
    </location>
</feature>
<feature type="helix" evidence="28">
    <location>
        <begin position="91"/>
        <end position="98"/>
    </location>
</feature>
<feature type="strand" evidence="28">
    <location>
        <begin position="103"/>
        <end position="110"/>
    </location>
</feature>
<feature type="strand" evidence="28">
    <location>
        <begin position="113"/>
        <end position="119"/>
    </location>
</feature>
<feature type="helix" evidence="28">
    <location>
        <begin position="122"/>
        <end position="124"/>
    </location>
</feature>
<feature type="strand" evidence="28">
    <location>
        <begin position="127"/>
        <end position="132"/>
    </location>
</feature>
<feature type="helix" evidence="28">
    <location>
        <begin position="137"/>
        <end position="143"/>
    </location>
</feature>
<feature type="strand" evidence="28">
    <location>
        <begin position="148"/>
        <end position="153"/>
    </location>
</feature>
<feature type="helix" evidence="28">
    <location>
        <begin position="155"/>
        <end position="160"/>
    </location>
</feature>
<feature type="helix" evidence="28">
    <location>
        <begin position="162"/>
        <end position="167"/>
    </location>
</feature>
<feature type="helix" evidence="28">
    <location>
        <begin position="174"/>
        <end position="180"/>
    </location>
</feature>
<feature type="strand" evidence="28">
    <location>
        <begin position="183"/>
        <end position="185"/>
    </location>
</feature>
<feature type="helix" evidence="28">
    <location>
        <begin position="186"/>
        <end position="188"/>
    </location>
</feature>
<feature type="strand" evidence="28">
    <location>
        <begin position="191"/>
        <end position="193"/>
    </location>
</feature>
<feature type="turn" evidence="28">
    <location>
        <begin position="196"/>
        <end position="198"/>
    </location>
</feature>
<feature type="strand" evidence="28">
    <location>
        <begin position="200"/>
        <end position="204"/>
    </location>
</feature>
<feature type="helix" evidence="27">
    <location>
        <begin position="213"/>
        <end position="215"/>
    </location>
</feature>
<feature type="strand" evidence="28">
    <location>
        <begin position="217"/>
        <end position="225"/>
    </location>
</feature>
<feature type="helix" evidence="28">
    <location>
        <begin position="230"/>
        <end position="232"/>
    </location>
</feature>
<feature type="helix" evidence="28">
    <location>
        <begin position="235"/>
        <end position="237"/>
    </location>
</feature>
<feature type="helix" evidence="28">
    <location>
        <begin position="238"/>
        <end position="256"/>
    </location>
</feature>
<feature type="helix" evidence="28">
    <location>
        <begin position="260"/>
        <end position="262"/>
    </location>
</feature>
<feature type="strand" evidence="28">
    <location>
        <begin position="263"/>
        <end position="270"/>
    </location>
</feature>
<feature type="strand" evidence="28">
    <location>
        <begin position="272"/>
        <end position="275"/>
    </location>
</feature>
<feature type="strand" evidence="28">
    <location>
        <begin position="277"/>
        <end position="282"/>
    </location>
</feature>
<feature type="turn" evidence="28">
    <location>
        <begin position="292"/>
        <end position="294"/>
    </location>
</feature>
<feature type="strand" evidence="28">
    <location>
        <begin position="295"/>
        <end position="297"/>
    </location>
</feature>
<feature type="helix" evidence="28">
    <location>
        <begin position="298"/>
        <end position="307"/>
    </location>
</feature>
<feature type="helix" evidence="28">
    <location>
        <begin position="311"/>
        <end position="314"/>
    </location>
</feature>
<feature type="strand" evidence="28">
    <location>
        <begin position="317"/>
        <end position="322"/>
    </location>
</feature>
<feature type="helix" evidence="28">
    <location>
        <begin position="326"/>
        <end position="333"/>
    </location>
</feature>
<accession>Q96C86</accession>
<accession>Q8NHL8</accession>
<accession>Q9Y2S5</accession>
<organism>
    <name type="scientific">Homo sapiens</name>
    <name type="common">Human</name>
    <dbReference type="NCBI Taxonomy" id="9606"/>
    <lineage>
        <taxon>Eukaryota</taxon>
        <taxon>Metazoa</taxon>
        <taxon>Chordata</taxon>
        <taxon>Craniata</taxon>
        <taxon>Vertebrata</taxon>
        <taxon>Euteleostomi</taxon>
        <taxon>Mammalia</taxon>
        <taxon>Eutheria</taxon>
        <taxon>Euarchontoglires</taxon>
        <taxon>Primates</taxon>
        <taxon>Haplorrhini</taxon>
        <taxon>Catarrhini</taxon>
        <taxon>Hominidae</taxon>
        <taxon>Homo</taxon>
    </lineage>
</organism>
<gene>
    <name type="primary">DCPS</name>
    <name type="synonym">DCS1</name>
    <name type="synonym">HINT5</name>
    <name type="ORF">HSPC015</name>
</gene>